<evidence type="ECO:0000250" key="1">
    <source>
        <dbReference type="UniProtKB" id="Q8BUB4"/>
    </source>
</evidence>
<evidence type="ECO:0000255" key="2">
    <source>
        <dbReference type="PROSITE-ProRule" id="PRU00091"/>
    </source>
</evidence>
<evidence type="ECO:0000269" key="3">
    <source>
    </source>
</evidence>
<evidence type="ECO:0000269" key="4">
    <source>
    </source>
</evidence>
<evidence type="ECO:0000269" key="5">
    <source>
    </source>
</evidence>
<evidence type="ECO:0000269" key="6">
    <source>
    </source>
</evidence>
<evidence type="ECO:0000303" key="7">
    <source>
    </source>
</evidence>
<evidence type="ECO:0000305" key="8"/>
<name>WDFY2_HUMAN</name>
<gene>
    <name type="primary">WDFY2</name>
    <name type="synonym">WDF2</name>
    <name type="synonym">ZFYVE22</name>
</gene>
<organism>
    <name type="scientific">Homo sapiens</name>
    <name type="common">Human</name>
    <dbReference type="NCBI Taxonomy" id="9606"/>
    <lineage>
        <taxon>Eukaryota</taxon>
        <taxon>Metazoa</taxon>
        <taxon>Chordata</taxon>
        <taxon>Craniata</taxon>
        <taxon>Vertebrata</taxon>
        <taxon>Euteleostomi</taxon>
        <taxon>Mammalia</taxon>
        <taxon>Eutheria</taxon>
        <taxon>Euarchontoglires</taxon>
        <taxon>Primates</taxon>
        <taxon>Haplorrhini</taxon>
        <taxon>Catarrhini</taxon>
        <taxon>Hominidae</taxon>
        <taxon>Homo</taxon>
    </lineage>
</organism>
<accession>Q96P53</accession>
<accession>B1AL86</accession>
<accession>Q96CS1</accession>
<feature type="chain" id="PRO_0000051336" description="WD repeat and FYVE domain-containing protein 2">
    <location>
        <begin position="1"/>
        <end position="400"/>
    </location>
</feature>
<feature type="repeat" description="WD 1">
    <location>
        <begin position="22"/>
        <end position="61"/>
    </location>
</feature>
<feature type="repeat" description="WD 2">
    <location>
        <begin position="66"/>
        <end position="105"/>
    </location>
</feature>
<feature type="repeat" description="WD 3">
    <location>
        <begin position="112"/>
        <end position="150"/>
    </location>
</feature>
<feature type="repeat" description="WD 4">
    <location>
        <begin position="153"/>
        <end position="192"/>
    </location>
</feature>
<feature type="repeat" description="WD 5">
    <location>
        <begin position="197"/>
        <end position="236"/>
    </location>
</feature>
<feature type="repeat" description="WD 6">
    <location>
        <begin position="240"/>
        <end position="279"/>
    </location>
</feature>
<feature type="repeat" description="WD 7">
    <location>
        <begin position="364"/>
        <end position="399"/>
    </location>
</feature>
<feature type="zinc finger region" description="FYVE-type" evidence="2">
    <location>
        <begin position="281"/>
        <end position="352"/>
    </location>
</feature>
<feature type="binding site" evidence="2">
    <location>
        <position position="287"/>
    </location>
    <ligand>
        <name>Zn(2+)</name>
        <dbReference type="ChEBI" id="CHEBI:29105"/>
        <label>1</label>
    </ligand>
</feature>
<feature type="binding site" evidence="2">
    <location>
        <position position="290"/>
    </location>
    <ligand>
        <name>Zn(2+)</name>
        <dbReference type="ChEBI" id="CHEBI:29105"/>
        <label>1</label>
    </ligand>
</feature>
<feature type="binding site" evidence="2">
    <location>
        <position position="314"/>
    </location>
    <ligand>
        <name>Zn(2+)</name>
        <dbReference type="ChEBI" id="CHEBI:29105"/>
        <label>2</label>
    </ligand>
</feature>
<feature type="binding site" evidence="2">
    <location>
        <position position="317"/>
    </location>
    <ligand>
        <name>Zn(2+)</name>
        <dbReference type="ChEBI" id="CHEBI:29105"/>
        <label>2</label>
    </ligand>
</feature>
<feature type="binding site" evidence="2">
    <location>
        <position position="322"/>
    </location>
    <ligand>
        <name>Zn(2+)</name>
        <dbReference type="ChEBI" id="CHEBI:29105"/>
        <label>1</label>
    </ligand>
</feature>
<feature type="binding site" evidence="2">
    <location>
        <position position="325"/>
    </location>
    <ligand>
        <name>Zn(2+)</name>
        <dbReference type="ChEBI" id="CHEBI:29105"/>
        <label>1</label>
    </ligand>
</feature>
<feature type="binding site" evidence="2">
    <location>
        <position position="344"/>
    </location>
    <ligand>
        <name>Zn(2+)</name>
        <dbReference type="ChEBI" id="CHEBI:29105"/>
        <label>2</label>
    </ligand>
</feature>
<feature type="binding site" evidence="2">
    <location>
        <position position="347"/>
    </location>
    <ligand>
        <name>Zn(2+)</name>
        <dbReference type="ChEBI" id="CHEBI:29105"/>
        <label>2</label>
    </ligand>
</feature>
<feature type="sequence conflict" description="In Ref. 1; AAL04162." evidence="8" ref="1">
    <original>Y</original>
    <variation>C</variation>
    <location>
        <position position="110"/>
    </location>
</feature>
<feature type="sequence conflict" description="In Ref. 1; AAL04162." evidence="8" ref="1">
    <original>G</original>
    <variation>E</variation>
    <location>
        <position position="197"/>
    </location>
</feature>
<protein>
    <recommendedName>
        <fullName>WD repeat and FYVE domain-containing protein 2</fullName>
    </recommendedName>
    <alternativeName>
        <fullName evidence="7">Propeller-FYVE protein</fullName>
        <shortName>Prof</shortName>
    </alternativeName>
    <alternativeName>
        <fullName>WD40- and FYVE domain-containing protein 2</fullName>
    </alternativeName>
    <alternativeName>
        <fullName>Zinc finger FYVE domain-containing protein 22</fullName>
    </alternativeName>
</protein>
<reference key="1">
    <citation type="submission" date="2001-08" db="EMBL/GenBank/DDBJ databases">
        <title>WD40- and FYVE-domain containing protein 2 (WDF2).</title>
        <authorList>
            <person name="Hong W."/>
        </authorList>
    </citation>
    <scope>NUCLEOTIDE SEQUENCE [MRNA]</scope>
</reference>
<reference key="2">
    <citation type="journal article" date="2004" name="Nature">
        <title>The DNA sequence and analysis of human chromosome 13.</title>
        <authorList>
            <person name="Dunham A."/>
            <person name="Matthews L.H."/>
            <person name="Burton J."/>
            <person name="Ashurst J.L."/>
            <person name="Howe K.L."/>
            <person name="Ashcroft K.J."/>
            <person name="Beare D.M."/>
            <person name="Burford D.C."/>
            <person name="Hunt S.E."/>
            <person name="Griffiths-Jones S."/>
            <person name="Jones M.C."/>
            <person name="Keenan S.J."/>
            <person name="Oliver K."/>
            <person name="Scott C.E."/>
            <person name="Ainscough R."/>
            <person name="Almeida J.P."/>
            <person name="Ambrose K.D."/>
            <person name="Andrews D.T."/>
            <person name="Ashwell R.I.S."/>
            <person name="Babbage A.K."/>
            <person name="Bagguley C.L."/>
            <person name="Bailey J."/>
            <person name="Bannerjee R."/>
            <person name="Barlow K.F."/>
            <person name="Bates K."/>
            <person name="Beasley H."/>
            <person name="Bird C.P."/>
            <person name="Bray-Allen S."/>
            <person name="Brown A.J."/>
            <person name="Brown J.Y."/>
            <person name="Burrill W."/>
            <person name="Carder C."/>
            <person name="Carter N.P."/>
            <person name="Chapman J.C."/>
            <person name="Clamp M.E."/>
            <person name="Clark S.Y."/>
            <person name="Clarke G."/>
            <person name="Clee C.M."/>
            <person name="Clegg S.C."/>
            <person name="Cobley V."/>
            <person name="Collins J.E."/>
            <person name="Corby N."/>
            <person name="Coville G.J."/>
            <person name="Deloukas P."/>
            <person name="Dhami P."/>
            <person name="Dunham I."/>
            <person name="Dunn M."/>
            <person name="Earthrowl M.E."/>
            <person name="Ellington A.G."/>
            <person name="Faulkner L."/>
            <person name="Frankish A.G."/>
            <person name="Frankland J."/>
            <person name="French L."/>
            <person name="Garner P."/>
            <person name="Garnett J."/>
            <person name="Gilbert J.G.R."/>
            <person name="Gilson C.J."/>
            <person name="Ghori J."/>
            <person name="Grafham D.V."/>
            <person name="Gribble S.M."/>
            <person name="Griffiths C."/>
            <person name="Hall R.E."/>
            <person name="Hammond S."/>
            <person name="Harley J.L."/>
            <person name="Hart E.A."/>
            <person name="Heath P.D."/>
            <person name="Howden P.J."/>
            <person name="Huckle E.J."/>
            <person name="Hunt P.J."/>
            <person name="Hunt A.R."/>
            <person name="Johnson C."/>
            <person name="Johnson D."/>
            <person name="Kay M."/>
            <person name="Kimberley A.M."/>
            <person name="King A."/>
            <person name="Laird G.K."/>
            <person name="Langford C.J."/>
            <person name="Lawlor S."/>
            <person name="Leongamornlert D.A."/>
            <person name="Lloyd D.M."/>
            <person name="Lloyd C."/>
            <person name="Loveland J.E."/>
            <person name="Lovell J."/>
            <person name="Martin S."/>
            <person name="Mashreghi-Mohammadi M."/>
            <person name="McLaren S.J."/>
            <person name="McMurray A."/>
            <person name="Milne S."/>
            <person name="Moore M.J.F."/>
            <person name="Nickerson T."/>
            <person name="Palmer S.A."/>
            <person name="Pearce A.V."/>
            <person name="Peck A.I."/>
            <person name="Pelan S."/>
            <person name="Phillimore B."/>
            <person name="Porter K.M."/>
            <person name="Rice C.M."/>
            <person name="Searle S."/>
            <person name="Sehra H.K."/>
            <person name="Shownkeen R."/>
            <person name="Skuce C.D."/>
            <person name="Smith M."/>
            <person name="Steward C.A."/>
            <person name="Sycamore N."/>
            <person name="Tester J."/>
            <person name="Thomas D.W."/>
            <person name="Tracey A."/>
            <person name="Tromans A."/>
            <person name="Tubby B."/>
            <person name="Wall M."/>
            <person name="Wallis J.M."/>
            <person name="West A.P."/>
            <person name="Whitehead S.L."/>
            <person name="Willey D.L."/>
            <person name="Wilming L."/>
            <person name="Wray P.W."/>
            <person name="Wright M.W."/>
            <person name="Young L."/>
            <person name="Coulson A."/>
            <person name="Durbin R.M."/>
            <person name="Hubbard T."/>
            <person name="Sulston J.E."/>
            <person name="Beck S."/>
            <person name="Bentley D.R."/>
            <person name="Rogers J."/>
            <person name="Ross M.T."/>
        </authorList>
    </citation>
    <scope>NUCLEOTIDE SEQUENCE [LARGE SCALE GENOMIC DNA]</scope>
</reference>
<reference key="3">
    <citation type="submission" date="2005-07" db="EMBL/GenBank/DDBJ databases">
        <authorList>
            <person name="Mural R.J."/>
            <person name="Istrail S."/>
            <person name="Sutton G.G."/>
            <person name="Florea L."/>
            <person name="Halpern A.L."/>
            <person name="Mobarry C.M."/>
            <person name="Lippert R."/>
            <person name="Walenz B."/>
            <person name="Shatkay H."/>
            <person name="Dew I."/>
            <person name="Miller J.R."/>
            <person name="Flanigan M.J."/>
            <person name="Edwards N.J."/>
            <person name="Bolanos R."/>
            <person name="Fasulo D."/>
            <person name="Halldorsson B.V."/>
            <person name="Hannenhalli S."/>
            <person name="Turner R."/>
            <person name="Yooseph S."/>
            <person name="Lu F."/>
            <person name="Nusskern D.R."/>
            <person name="Shue B.C."/>
            <person name="Zheng X.H."/>
            <person name="Zhong F."/>
            <person name="Delcher A.L."/>
            <person name="Huson D.H."/>
            <person name="Kravitz S.A."/>
            <person name="Mouchard L."/>
            <person name="Reinert K."/>
            <person name="Remington K.A."/>
            <person name="Clark A.G."/>
            <person name="Waterman M.S."/>
            <person name="Eichler E.E."/>
            <person name="Adams M.D."/>
            <person name="Hunkapiller M.W."/>
            <person name="Myers E.W."/>
            <person name="Venter J.C."/>
        </authorList>
    </citation>
    <scope>NUCLEOTIDE SEQUENCE [LARGE SCALE GENOMIC DNA]</scope>
</reference>
<reference key="4">
    <citation type="journal article" date="2004" name="Genome Res.">
        <title>The status, quality, and expansion of the NIH full-length cDNA project: the Mammalian Gene Collection (MGC).</title>
        <authorList>
            <consortium name="The MGC Project Team"/>
        </authorList>
    </citation>
    <scope>NUCLEOTIDE SEQUENCE [LARGE SCALE MRNA]</scope>
    <source>
        <tissue>Placenta</tissue>
    </source>
</reference>
<reference key="5">
    <citation type="journal article" date="2006" name="Biochem. J.">
        <title>A WD-FYVE protein binds to the kinases Akt and PKCzeta/lambda.</title>
        <authorList>
            <person name="Fritzius T."/>
            <person name="Burkard G."/>
            <person name="Haas E."/>
            <person name="Heinrich J."/>
            <person name="Schweneker M."/>
            <person name="Bosse M."/>
            <person name="Zimmermann S."/>
            <person name="Frey A.D."/>
            <person name="Caelers A."/>
            <person name="Bachmann A.S."/>
            <person name="Moelling K."/>
        </authorList>
    </citation>
    <scope>SUBUNIT</scope>
    <scope>SUBCELLULAR LOCATION</scope>
    <scope>INTERACTION WITH AKT1; AKT2; PRKCZ AND PRKCI</scope>
    <scope>DOMAIN FYVE-TYPE</scope>
</reference>
<reference key="6">
    <citation type="journal article" date="2006" name="Proc. Natl. Acad. Sci. U.S.A.">
        <title>The WD40 and FYVE domain containing protein 2 defines a class of early endosomes necessary for endocytosis.</title>
        <authorList>
            <person name="Hayakawa A."/>
            <person name="Leonard D."/>
            <person name="Murphy S."/>
            <person name="Hayes S."/>
            <person name="Soto M."/>
            <person name="Fogarty K."/>
            <person name="Standley C."/>
            <person name="Bellve K."/>
            <person name="Lambright D."/>
            <person name="Mello C."/>
            <person name="Corvera S."/>
        </authorList>
    </citation>
    <scope>FUNCTION</scope>
    <scope>SUBCELLULAR LOCATION</scope>
</reference>
<reference key="7">
    <citation type="journal article" date="2007" name="FEBS J.">
        <title>WD-repeat-propeller-FYVE protein, ProF, binds VAMP2 and protein kinase Czeta.</title>
        <authorList>
            <person name="Fritzius T."/>
            <person name="Frey A.D."/>
            <person name="Schweneker M."/>
            <person name="Mayer D."/>
            <person name="Moelling K."/>
        </authorList>
    </citation>
    <scope>FUNCTION</scope>
    <scope>INTERACTION WITH VAMP2</scope>
    <scope>COMPLEX FORMATION WITH VAMP2 AND PRKCZ</scope>
    <scope>SUBCELLULAR LOCATION</scope>
</reference>
<reference key="8">
    <citation type="journal article" date="2008" name="EMBO J.">
        <title>Akt- and Foxo1-interacting WD-repeat-FYVE protein promotes adipogenesis.</title>
        <authorList>
            <person name="Fritzius T."/>
            <person name="Moelling K."/>
        </authorList>
    </citation>
    <scope>FUNCTION</scope>
</reference>
<keyword id="KW-0963">Cytoplasm</keyword>
<keyword id="KW-0967">Endosome</keyword>
<keyword id="KW-0479">Metal-binding</keyword>
<keyword id="KW-1267">Proteomics identification</keyword>
<keyword id="KW-1185">Reference proteome</keyword>
<keyword id="KW-0677">Repeat</keyword>
<keyword id="KW-0853">WD repeat</keyword>
<keyword id="KW-0862">Zinc</keyword>
<keyword id="KW-0863">Zinc-finger</keyword>
<comment type="function">
    <text evidence="1 4 5 6">Acts in an adapter protein-like fashion to mediate the interaction between the kinase PRKCZ and its substrate VAMP2 and increases the PRKCZ-dependent phosphorylation of VAMP2 (PubMed:17313651). Positively regulates adipocyte differentiation, by facilitating the phosphorylation and thus inactivation of the anti-adipogenetic transcription factor FOXO1 by the kinase AKT1 (PubMed:18388859). Plays a role in endosomal control of AKT2 signaling; required for insulin-stimulated AKT2 phosphorylation and glucose uptake and insulin-stimulated phosphorylation of AKT2 substrates (By similarity). Participates in transferrin receptor endocytosis (PubMed:16873553).</text>
</comment>
<comment type="subunit">
    <text evidence="1 3 5">Homodimer (PubMed:16792529). Interacts (via WD repeats 1-3) with AKT1, AKT2, PRKCZ and PRKCI (PubMed:16792529). Interacts with VAMP2 (PubMed:17313651). Forms a complex with VAMP2 and PRKCZ (PubMed:17313651). Interacts with FOXO1 (By similarity). Forms a complex with AKT1 and FOXO1 (By similarity).</text>
</comment>
<comment type="interaction">
    <interactant intactId="EBI-9478589">
        <id>Q96P53</id>
    </interactant>
    <interactant intactId="EBI-714543">
        <id>Q15041</id>
        <label>ARL6IP1</label>
    </interactant>
    <organismsDiffer>false</organismsDiffer>
    <experiments>3</experiments>
</comment>
<comment type="interaction">
    <interactant intactId="EBI-9478589">
        <id>Q96P53</id>
    </interactant>
    <interactant intactId="EBI-357298">
        <id>Q9Y266</id>
        <label>NUDC</label>
    </interactant>
    <organismsDiffer>false</organismsDiffer>
    <experiments>2</experiments>
</comment>
<comment type="interaction">
    <interactant intactId="EBI-9478589">
        <id>Q96P53</id>
    </interactant>
    <interactant intactId="EBI-1052363">
        <id>Q9NS64</id>
        <label>RPRM</label>
    </interactant>
    <organismsDiffer>false</organismsDiffer>
    <experiments>3</experiments>
</comment>
<comment type="interaction">
    <interactant intactId="EBI-9478589">
        <id>Q96P53</id>
    </interactant>
    <interactant intactId="EBI-9071725">
        <id>P08247</id>
        <label>SYP</label>
    </interactant>
    <organismsDiffer>false</organismsDiffer>
    <experiments>3</experiments>
</comment>
<comment type="interaction">
    <interactant intactId="EBI-9478589">
        <id>Q96P53</id>
    </interactant>
    <interactant intactId="EBI-2799703">
        <id>O95070</id>
        <label>YIF1A</label>
    </interactant>
    <organismsDiffer>false</organismsDiffer>
    <experiments>3</experiments>
</comment>
<comment type="subcellular location">
    <subcellularLocation>
        <location evidence="4">Endosome</location>
    </subcellularLocation>
    <subcellularLocation>
        <location evidence="3">Early endosome</location>
    </subcellularLocation>
    <subcellularLocation>
        <location evidence="1">Cytoplasm</location>
    </subcellularLocation>
    <text evidence="1 3 5">Localizes to intracellular vesicles (PubMed:16792529). Colocalizes with VAMP2 and PRKCZ in intracellular vesicles (PubMed:17313651). Colocalizes with AKT2 in early endosomes (By similarity).</text>
</comment>
<comment type="domain">
    <text evidence="3">The FYVE-type zinc finger is essential for its vesicular localization.</text>
</comment>
<proteinExistence type="evidence at protein level"/>
<sequence>MAAEIQPKPLTRKPILLQRMEGSQEVVNMAVIVPKEEGVISVSEDRTVRVWLKRDSGQYWPSVYHAMPSPCSCMSFNPETRRLSIGLDNGTISEFILSEDYNKMTPVKNYQAHQSRVTMILFVLELEWVLSTGQDKQFAWHCSESGQRLGGYRTSAVASGLQFDVETRHVFIGDHSGQVTILKLEQENCTLVTTFRGHTGGVTALCWDPVQRVLFSGSSDHSVIMWDIGGRKGTAIELQGHNDRVQALSYAQHTRQLISCGGDGGIVVWNMDVERQETPEWLDSDSCQKCDQPFFWNFKQMWDSKKIGLRQHHCRKCGKAVCGKCSSKRSSIPLMGFEFEVRVCDSCHEAITDEERAPTATFHDSKHNIVHVHFDATRGWLLTSGTDKVIKLWDMTPVVS</sequence>
<dbReference type="EMBL" id="AF411978">
    <property type="protein sequence ID" value="AAL04162.1"/>
    <property type="molecule type" value="mRNA"/>
</dbReference>
<dbReference type="EMBL" id="AL136525">
    <property type="status" value="NOT_ANNOTATED_CDS"/>
    <property type="molecule type" value="Genomic_DNA"/>
</dbReference>
<dbReference type="EMBL" id="AL139183">
    <property type="status" value="NOT_ANNOTATED_CDS"/>
    <property type="molecule type" value="Genomic_DNA"/>
</dbReference>
<dbReference type="EMBL" id="CH471075">
    <property type="protein sequence ID" value="EAX08883.1"/>
    <property type="molecule type" value="Genomic_DNA"/>
</dbReference>
<dbReference type="EMBL" id="BC014004">
    <property type="protein sequence ID" value="AAH14004.1"/>
    <property type="molecule type" value="mRNA"/>
</dbReference>
<dbReference type="CCDS" id="CCDS9429.1"/>
<dbReference type="RefSeq" id="NP_443182.1">
    <property type="nucleotide sequence ID" value="NM_052950.4"/>
</dbReference>
<dbReference type="SMR" id="Q96P53"/>
<dbReference type="BioGRID" id="125458">
    <property type="interactions" value="35"/>
</dbReference>
<dbReference type="CORUM" id="Q96P53"/>
<dbReference type="FunCoup" id="Q96P53">
    <property type="interactions" value="2322"/>
</dbReference>
<dbReference type="IntAct" id="Q96P53">
    <property type="interactions" value="29"/>
</dbReference>
<dbReference type="STRING" id="9606.ENSP00000298125"/>
<dbReference type="iPTMnet" id="Q96P53"/>
<dbReference type="PhosphoSitePlus" id="Q96P53"/>
<dbReference type="BioMuta" id="WDFY2"/>
<dbReference type="DMDM" id="51316902"/>
<dbReference type="jPOST" id="Q96P53"/>
<dbReference type="MassIVE" id="Q96P53"/>
<dbReference type="PaxDb" id="9606-ENSP00000298125"/>
<dbReference type="PeptideAtlas" id="Q96P53"/>
<dbReference type="ProteomicsDB" id="77632"/>
<dbReference type="Pumba" id="Q96P53"/>
<dbReference type="Antibodypedia" id="24090">
    <property type="antibodies" value="49 antibodies from 14 providers"/>
</dbReference>
<dbReference type="DNASU" id="115825"/>
<dbReference type="Ensembl" id="ENST00000298125.7">
    <property type="protein sequence ID" value="ENSP00000298125.4"/>
    <property type="gene ID" value="ENSG00000139668.9"/>
</dbReference>
<dbReference type="GeneID" id="115825"/>
<dbReference type="KEGG" id="hsa:115825"/>
<dbReference type="MANE-Select" id="ENST00000298125.7">
    <property type="protein sequence ID" value="ENSP00000298125.4"/>
    <property type="RefSeq nucleotide sequence ID" value="NM_052950.4"/>
    <property type="RefSeq protein sequence ID" value="NP_443182.1"/>
</dbReference>
<dbReference type="UCSC" id="uc001vfp.4">
    <property type="organism name" value="human"/>
</dbReference>
<dbReference type="AGR" id="HGNC:20482"/>
<dbReference type="CTD" id="115825"/>
<dbReference type="DisGeNET" id="115825"/>
<dbReference type="GeneCards" id="WDFY2"/>
<dbReference type="HGNC" id="HGNC:20482">
    <property type="gene designation" value="WDFY2"/>
</dbReference>
<dbReference type="HPA" id="ENSG00000139668">
    <property type="expression patterns" value="Low tissue specificity"/>
</dbReference>
<dbReference type="MIM" id="610418">
    <property type="type" value="gene"/>
</dbReference>
<dbReference type="neXtProt" id="NX_Q96P53"/>
<dbReference type="OpenTargets" id="ENSG00000139668"/>
<dbReference type="PharmGKB" id="PA134870231"/>
<dbReference type="VEuPathDB" id="HostDB:ENSG00000139668"/>
<dbReference type="eggNOG" id="KOG1409">
    <property type="taxonomic scope" value="Eukaryota"/>
</dbReference>
<dbReference type="GeneTree" id="ENSGT00940000158527"/>
<dbReference type="HOGENOM" id="CLU_046919_0_0_1"/>
<dbReference type="InParanoid" id="Q96P53"/>
<dbReference type="OMA" id="EIRCLRW"/>
<dbReference type="OrthoDB" id="63070at2759"/>
<dbReference type="PAN-GO" id="Q96P53">
    <property type="GO annotations" value="3 GO annotations based on evolutionary models"/>
</dbReference>
<dbReference type="PhylomeDB" id="Q96P53"/>
<dbReference type="TreeFam" id="TF314470"/>
<dbReference type="PathwayCommons" id="Q96P53"/>
<dbReference type="SignaLink" id="Q96P53"/>
<dbReference type="BioGRID-ORCS" id="115825">
    <property type="hits" value="11 hits in 1157 CRISPR screens"/>
</dbReference>
<dbReference type="ChiTaRS" id="WDFY2">
    <property type="organism name" value="human"/>
</dbReference>
<dbReference type="GenomeRNAi" id="115825"/>
<dbReference type="Pharos" id="Q96P53">
    <property type="development level" value="Tbio"/>
</dbReference>
<dbReference type="PRO" id="PR:Q96P53"/>
<dbReference type="Proteomes" id="UP000005640">
    <property type="component" value="Chromosome 13"/>
</dbReference>
<dbReference type="RNAct" id="Q96P53">
    <property type="molecule type" value="protein"/>
</dbReference>
<dbReference type="Bgee" id="ENSG00000139668">
    <property type="expression patterns" value="Expressed in upper arm skin and 188 other cell types or tissues"/>
</dbReference>
<dbReference type="ExpressionAtlas" id="Q96P53">
    <property type="expression patterns" value="baseline and differential"/>
</dbReference>
<dbReference type="GO" id="GO:0005769">
    <property type="term" value="C:early endosome"/>
    <property type="evidence" value="ECO:0000314"/>
    <property type="project" value="UniProtKB"/>
</dbReference>
<dbReference type="GO" id="GO:0043231">
    <property type="term" value="C:intracellular membrane-bounded organelle"/>
    <property type="evidence" value="ECO:0000314"/>
    <property type="project" value="HPA"/>
</dbReference>
<dbReference type="GO" id="GO:0031982">
    <property type="term" value="C:vesicle"/>
    <property type="evidence" value="ECO:0000314"/>
    <property type="project" value="UniProtKB"/>
</dbReference>
<dbReference type="GO" id="GO:0008270">
    <property type="term" value="F:zinc ion binding"/>
    <property type="evidence" value="ECO:0007669"/>
    <property type="project" value="UniProtKB-KW"/>
</dbReference>
<dbReference type="GO" id="GO:0045600">
    <property type="term" value="P:positive regulation of fat cell differentiation"/>
    <property type="evidence" value="ECO:0000315"/>
    <property type="project" value="UniProtKB"/>
</dbReference>
<dbReference type="GO" id="GO:0001934">
    <property type="term" value="P:positive regulation of protein phosphorylation"/>
    <property type="evidence" value="ECO:0000314"/>
    <property type="project" value="UniProtKB"/>
</dbReference>
<dbReference type="CDD" id="cd15718">
    <property type="entry name" value="FYVE_WDFY1_like"/>
    <property type="match status" value="1"/>
</dbReference>
<dbReference type="FunFam" id="2.130.10.10:FF:000285">
    <property type="entry name" value="WD repeat and FYVE domain-containing protein 1"/>
    <property type="match status" value="1"/>
</dbReference>
<dbReference type="FunFam" id="3.30.40.10:FF:000105">
    <property type="entry name" value="WD repeat and FYVE domain-containing protein 2"/>
    <property type="match status" value="1"/>
</dbReference>
<dbReference type="Gene3D" id="2.130.10.10">
    <property type="entry name" value="YVTN repeat-like/Quinoprotein amine dehydrogenase"/>
    <property type="match status" value="2"/>
</dbReference>
<dbReference type="Gene3D" id="3.30.40.10">
    <property type="entry name" value="Zinc/RING finger domain, C3HC4 (zinc finger)"/>
    <property type="match status" value="1"/>
</dbReference>
<dbReference type="InterPro" id="IPR020472">
    <property type="entry name" value="G-protein_beta_WD-40_rep"/>
</dbReference>
<dbReference type="InterPro" id="IPR015943">
    <property type="entry name" value="WD40/YVTN_repeat-like_dom_sf"/>
</dbReference>
<dbReference type="InterPro" id="IPR019775">
    <property type="entry name" value="WD40_repeat_CS"/>
</dbReference>
<dbReference type="InterPro" id="IPR036322">
    <property type="entry name" value="WD40_repeat_dom_sf"/>
</dbReference>
<dbReference type="InterPro" id="IPR001680">
    <property type="entry name" value="WD40_rpt"/>
</dbReference>
<dbReference type="InterPro" id="IPR042234">
    <property type="entry name" value="WDFY1/WDFY2"/>
</dbReference>
<dbReference type="InterPro" id="IPR000306">
    <property type="entry name" value="Znf_FYVE"/>
</dbReference>
<dbReference type="InterPro" id="IPR017455">
    <property type="entry name" value="Znf_FYVE-rel"/>
</dbReference>
<dbReference type="InterPro" id="IPR011011">
    <property type="entry name" value="Znf_FYVE_PHD"/>
</dbReference>
<dbReference type="InterPro" id="IPR013083">
    <property type="entry name" value="Znf_RING/FYVE/PHD"/>
</dbReference>
<dbReference type="PANTHER" id="PTHR46189">
    <property type="entry name" value="LD41958P"/>
    <property type="match status" value="1"/>
</dbReference>
<dbReference type="PANTHER" id="PTHR46189:SF3">
    <property type="entry name" value="WD REPEAT AND FYVE DOMAIN-CONTAINING PROTEIN 2"/>
    <property type="match status" value="1"/>
</dbReference>
<dbReference type="Pfam" id="PF01363">
    <property type="entry name" value="FYVE"/>
    <property type="match status" value="1"/>
</dbReference>
<dbReference type="Pfam" id="PF00400">
    <property type="entry name" value="WD40"/>
    <property type="match status" value="3"/>
</dbReference>
<dbReference type="PRINTS" id="PR00320">
    <property type="entry name" value="GPROTEINBRPT"/>
</dbReference>
<dbReference type="SMART" id="SM00064">
    <property type="entry name" value="FYVE"/>
    <property type="match status" value="1"/>
</dbReference>
<dbReference type="SMART" id="SM00320">
    <property type="entry name" value="WD40"/>
    <property type="match status" value="5"/>
</dbReference>
<dbReference type="SUPFAM" id="SSF57903">
    <property type="entry name" value="FYVE/PHD zinc finger"/>
    <property type="match status" value="1"/>
</dbReference>
<dbReference type="SUPFAM" id="SSF50978">
    <property type="entry name" value="WD40 repeat-like"/>
    <property type="match status" value="1"/>
</dbReference>
<dbReference type="PROSITE" id="PS00678">
    <property type="entry name" value="WD_REPEATS_1"/>
    <property type="match status" value="3"/>
</dbReference>
<dbReference type="PROSITE" id="PS50082">
    <property type="entry name" value="WD_REPEATS_2"/>
    <property type="match status" value="4"/>
</dbReference>
<dbReference type="PROSITE" id="PS50294">
    <property type="entry name" value="WD_REPEATS_REGION"/>
    <property type="match status" value="2"/>
</dbReference>
<dbReference type="PROSITE" id="PS50178">
    <property type="entry name" value="ZF_FYVE"/>
    <property type="match status" value="1"/>
</dbReference>